<organismHost>
    <name type="scientific">Cryphonectria parasitica</name>
    <name type="common">Chestnut blight fungus</name>
    <name type="synonym">Endothia parasitica</name>
    <dbReference type="NCBI Taxonomy" id="5116"/>
</organismHost>
<feature type="signal peptide" evidence="1">
    <location>
        <begin position="1"/>
        <end position="23"/>
    </location>
</feature>
<feature type="chain" id="PRO_0000403433" description="Uncharacterized protein VP11">
    <location>
        <begin position="24"/>
        <end position="101"/>
    </location>
</feature>
<feature type="transmembrane region" description="Helical" evidence="1">
    <location>
        <begin position="38"/>
        <end position="58"/>
    </location>
</feature>
<keyword id="KW-1043">Host membrane</keyword>
<keyword id="KW-0472">Membrane</keyword>
<keyword id="KW-1185">Reference proteome</keyword>
<keyword id="KW-0732">Signal</keyword>
<keyword id="KW-0812">Transmembrane</keyword>
<keyword id="KW-1133">Transmembrane helix</keyword>
<evidence type="ECO:0000255" key="1"/>
<evidence type="ECO:0000305" key="2"/>
<comment type="subcellular location">
    <subcellularLocation>
        <location evidence="2">Host membrane</location>
        <topology evidence="2">Single-pass membrane protein</topology>
    </subcellularLocation>
</comment>
<proteinExistence type="inferred from homology"/>
<organism>
    <name type="scientific">Cryphonectria parasitica mycoreovirus 1 (strain 9B21)</name>
    <name type="common">CpMYRV-1</name>
    <dbReference type="NCBI Taxonomy" id="230407"/>
    <lineage>
        <taxon>Viruses</taxon>
        <taxon>Riboviria</taxon>
        <taxon>Orthornavirae</taxon>
        <taxon>Duplornaviricota</taxon>
        <taxon>Resentoviricetes</taxon>
        <taxon>Reovirales</taxon>
        <taxon>Spinareoviridae</taxon>
        <taxon>Mycoreovirus</taxon>
        <taxon>Mycoreovirus 1</taxon>
    </lineage>
</organism>
<sequence length="101" mass="11462">MERRTGVVLIIFVTFCEAMMARAIEDFDTHYTKKIREFLLFIIHTSCTMVAFIIGNLAMTRPRRTHHNTITAPDETIHDDILLPPAYKSLASAPALGIKMV</sequence>
<accession>Q65YU5</accession>
<dbReference type="EMBL" id="AB179643">
    <property type="protein sequence ID" value="BAD51421.1"/>
    <property type="molecule type" value="Genomic_RNA"/>
</dbReference>
<dbReference type="RefSeq" id="YP_001936014.1">
    <property type="nucleotide sequence ID" value="NC_010753.1"/>
</dbReference>
<dbReference type="GeneID" id="6334553"/>
<dbReference type="KEGG" id="vg:6334553"/>
<dbReference type="Proteomes" id="UP000006719">
    <property type="component" value="Genome"/>
</dbReference>
<dbReference type="GO" id="GO:0033644">
    <property type="term" value="C:host cell membrane"/>
    <property type="evidence" value="ECO:0007669"/>
    <property type="project" value="UniProtKB-SubCell"/>
</dbReference>
<dbReference type="GO" id="GO:0016020">
    <property type="term" value="C:membrane"/>
    <property type="evidence" value="ECO:0007669"/>
    <property type="project" value="UniProtKB-KW"/>
</dbReference>
<name>VP11_MYRV9</name>
<protein>
    <recommendedName>
        <fullName>Uncharacterized protein VP11</fullName>
    </recommendedName>
</protein>
<reference key="1">
    <citation type="journal article" date="2004" name="J. Gen. Virol.">
        <title>Complete genome sequence of Mycoreovirus-1/Cp9B21, a member of a novel genus within the family Reoviridae, isolated from the chestnut blight fungus Cryphonectria parasitica.</title>
        <authorList>
            <person name="Suzuki N."/>
            <person name="Supyani S."/>
            <person name="Maruyama K."/>
            <person name="Hillman B.I."/>
        </authorList>
    </citation>
    <scope>NUCLEOTIDE SEQUENCE [GENOMIC RNA]</scope>
</reference>
<gene>
    <name type="primary">S11</name>
</gene>